<sequence>MSHSVKIYDTCIGCTQCVRACPTDVLEMIPWDGCKAKQIASAPRTEDCVGCKRCESACPTDFLSVRVYLWHETTRSMGLAY</sequence>
<organism>
    <name type="scientific">Ipomoea purpurea</name>
    <name type="common">Common morning glory</name>
    <name type="synonym">Pharbitis purpurea</name>
    <dbReference type="NCBI Taxonomy" id="4121"/>
    <lineage>
        <taxon>Eukaryota</taxon>
        <taxon>Viridiplantae</taxon>
        <taxon>Streptophyta</taxon>
        <taxon>Embryophyta</taxon>
        <taxon>Tracheophyta</taxon>
        <taxon>Spermatophyta</taxon>
        <taxon>Magnoliopsida</taxon>
        <taxon>eudicotyledons</taxon>
        <taxon>Gunneridae</taxon>
        <taxon>Pentapetalae</taxon>
        <taxon>asterids</taxon>
        <taxon>lamiids</taxon>
        <taxon>Solanales</taxon>
        <taxon>Convolvulaceae</taxon>
        <taxon>Ipomoeeae</taxon>
        <taxon>Ipomoea</taxon>
    </lineage>
</organism>
<name>PSAC_IPOPU</name>
<comment type="function">
    <text evidence="1">Apoprotein for the two 4Fe-4S centers FA and FB of photosystem I (PSI); essential for photochemical activity. FB is the terminal electron acceptor of PSI, donating electrons to ferredoxin. The C-terminus interacts with PsaA/B/D and helps assemble the protein into the PSI complex. Required for binding of PsaD and PsaE to PSI. PSI is a plastocyanin-ferredoxin oxidoreductase, converting photonic excitation into a charge separation, which transfers an electron from the donor P700 chlorophyll pair to the spectroscopically characterized acceptors A0, A1, FX, FA and FB in turn.</text>
</comment>
<comment type="catalytic activity">
    <reaction evidence="1">
        <text>reduced [plastocyanin] + hnu + oxidized [2Fe-2S]-[ferredoxin] = oxidized [plastocyanin] + reduced [2Fe-2S]-[ferredoxin]</text>
        <dbReference type="Rhea" id="RHEA:30407"/>
        <dbReference type="Rhea" id="RHEA-COMP:10000"/>
        <dbReference type="Rhea" id="RHEA-COMP:10001"/>
        <dbReference type="Rhea" id="RHEA-COMP:10039"/>
        <dbReference type="Rhea" id="RHEA-COMP:10040"/>
        <dbReference type="ChEBI" id="CHEBI:29036"/>
        <dbReference type="ChEBI" id="CHEBI:30212"/>
        <dbReference type="ChEBI" id="CHEBI:33737"/>
        <dbReference type="ChEBI" id="CHEBI:33738"/>
        <dbReference type="ChEBI" id="CHEBI:49552"/>
        <dbReference type="EC" id="1.97.1.12"/>
    </reaction>
</comment>
<comment type="cofactor">
    <cofactor evidence="1">
        <name>[4Fe-4S] cluster</name>
        <dbReference type="ChEBI" id="CHEBI:49883"/>
    </cofactor>
    <text evidence="1">Binds 2 [4Fe-4S] clusters. Cluster 2 is most probably the spectroscopically characterized electron acceptor FA and cluster 1 is most probably FB.</text>
</comment>
<comment type="subunit">
    <text evidence="1">The eukaryotic PSI reaction center is composed of at least 11 subunits.</text>
</comment>
<comment type="subcellular location">
    <subcellularLocation>
        <location evidence="1">Plastid</location>
        <location evidence="1">Chloroplast thylakoid membrane</location>
        <topology evidence="1">Peripheral membrane protein</topology>
        <orientation evidence="1">Stromal side</orientation>
    </subcellularLocation>
</comment>
<keyword id="KW-0004">4Fe-4S</keyword>
<keyword id="KW-0150">Chloroplast</keyword>
<keyword id="KW-0249">Electron transport</keyword>
<keyword id="KW-0408">Iron</keyword>
<keyword id="KW-0411">Iron-sulfur</keyword>
<keyword id="KW-0472">Membrane</keyword>
<keyword id="KW-0479">Metal-binding</keyword>
<keyword id="KW-0560">Oxidoreductase</keyword>
<keyword id="KW-0602">Photosynthesis</keyword>
<keyword id="KW-0603">Photosystem I</keyword>
<keyword id="KW-0934">Plastid</keyword>
<keyword id="KW-0677">Repeat</keyword>
<keyword id="KW-0793">Thylakoid</keyword>
<keyword id="KW-0813">Transport</keyword>
<reference key="1">
    <citation type="journal article" date="2007" name="BMC Plant Biol.">
        <title>Complete plastid genome sequences suggest strong selection for retention of photosynthetic genes in the parasitic plant genus Cuscuta.</title>
        <authorList>
            <person name="McNeal J.R."/>
            <person name="Kuehl J.V."/>
            <person name="Boore J.L."/>
            <person name="dePamphilis C.W."/>
        </authorList>
    </citation>
    <scope>NUCLEOTIDE SEQUENCE [LARGE SCALE GENOMIC DNA]</scope>
</reference>
<geneLocation type="chloroplast"/>
<feature type="chain" id="PRO_0000322043" description="Photosystem I iron-sulfur center">
    <location>
        <begin position="1"/>
        <end position="81"/>
    </location>
</feature>
<feature type="domain" description="4Fe-4S ferredoxin-type 1" evidence="1">
    <location>
        <begin position="2"/>
        <end position="31"/>
    </location>
</feature>
<feature type="domain" description="4Fe-4S ferredoxin-type 2" evidence="1">
    <location>
        <begin position="39"/>
        <end position="68"/>
    </location>
</feature>
<feature type="binding site" evidence="1">
    <location>
        <position position="11"/>
    </location>
    <ligand>
        <name>[4Fe-4S] cluster</name>
        <dbReference type="ChEBI" id="CHEBI:49883"/>
        <label>1</label>
    </ligand>
</feature>
<feature type="binding site" evidence="1">
    <location>
        <position position="14"/>
    </location>
    <ligand>
        <name>[4Fe-4S] cluster</name>
        <dbReference type="ChEBI" id="CHEBI:49883"/>
        <label>1</label>
    </ligand>
</feature>
<feature type="binding site" evidence="1">
    <location>
        <position position="17"/>
    </location>
    <ligand>
        <name>[4Fe-4S] cluster</name>
        <dbReference type="ChEBI" id="CHEBI:49883"/>
        <label>1</label>
    </ligand>
</feature>
<feature type="binding site" evidence="1">
    <location>
        <position position="21"/>
    </location>
    <ligand>
        <name>[4Fe-4S] cluster</name>
        <dbReference type="ChEBI" id="CHEBI:49883"/>
        <label>2</label>
    </ligand>
</feature>
<feature type="binding site" evidence="1">
    <location>
        <position position="48"/>
    </location>
    <ligand>
        <name>[4Fe-4S] cluster</name>
        <dbReference type="ChEBI" id="CHEBI:49883"/>
        <label>2</label>
    </ligand>
</feature>
<feature type="binding site" evidence="1">
    <location>
        <position position="51"/>
    </location>
    <ligand>
        <name>[4Fe-4S] cluster</name>
        <dbReference type="ChEBI" id="CHEBI:49883"/>
        <label>2</label>
    </ligand>
</feature>
<feature type="binding site" evidence="1">
    <location>
        <position position="54"/>
    </location>
    <ligand>
        <name>[4Fe-4S] cluster</name>
        <dbReference type="ChEBI" id="CHEBI:49883"/>
        <label>2</label>
    </ligand>
</feature>
<feature type="binding site" evidence="1">
    <location>
        <position position="58"/>
    </location>
    <ligand>
        <name>[4Fe-4S] cluster</name>
        <dbReference type="ChEBI" id="CHEBI:49883"/>
        <label>1</label>
    </ligand>
</feature>
<gene>
    <name evidence="1" type="primary">psaC</name>
</gene>
<evidence type="ECO:0000255" key="1">
    <source>
        <dbReference type="HAMAP-Rule" id="MF_01303"/>
    </source>
</evidence>
<accession>A7Y3L3</accession>
<proteinExistence type="inferred from homology"/>
<protein>
    <recommendedName>
        <fullName evidence="1">Photosystem I iron-sulfur center</fullName>
        <ecNumber evidence="1">1.97.1.12</ecNumber>
    </recommendedName>
    <alternativeName>
        <fullName evidence="1">9 kDa polypeptide</fullName>
    </alternativeName>
    <alternativeName>
        <fullName evidence="1">PSI-C</fullName>
    </alternativeName>
    <alternativeName>
        <fullName evidence="1">Photosystem I subunit VII</fullName>
    </alternativeName>
    <alternativeName>
        <fullName evidence="1">PsaC</fullName>
    </alternativeName>
</protein>
<dbReference type="EC" id="1.97.1.12" evidence="1"/>
<dbReference type="EMBL" id="EU118126">
    <property type="protein sequence ID" value="ABV02402.1"/>
    <property type="molecule type" value="Genomic_DNA"/>
</dbReference>
<dbReference type="RefSeq" id="YP_001468362.1">
    <property type="nucleotide sequence ID" value="NC_009808.1"/>
</dbReference>
<dbReference type="SMR" id="A7Y3L3"/>
<dbReference type="GeneID" id="5601246"/>
<dbReference type="GO" id="GO:0009535">
    <property type="term" value="C:chloroplast thylakoid membrane"/>
    <property type="evidence" value="ECO:0007669"/>
    <property type="project" value="UniProtKB-SubCell"/>
</dbReference>
<dbReference type="GO" id="GO:0009522">
    <property type="term" value="C:photosystem I"/>
    <property type="evidence" value="ECO:0007669"/>
    <property type="project" value="UniProtKB-KW"/>
</dbReference>
<dbReference type="GO" id="GO:0051539">
    <property type="term" value="F:4 iron, 4 sulfur cluster binding"/>
    <property type="evidence" value="ECO:0007669"/>
    <property type="project" value="UniProtKB-KW"/>
</dbReference>
<dbReference type="GO" id="GO:0009055">
    <property type="term" value="F:electron transfer activity"/>
    <property type="evidence" value="ECO:0007669"/>
    <property type="project" value="UniProtKB-UniRule"/>
</dbReference>
<dbReference type="GO" id="GO:0046872">
    <property type="term" value="F:metal ion binding"/>
    <property type="evidence" value="ECO:0007669"/>
    <property type="project" value="UniProtKB-KW"/>
</dbReference>
<dbReference type="GO" id="GO:0016491">
    <property type="term" value="F:oxidoreductase activity"/>
    <property type="evidence" value="ECO:0007669"/>
    <property type="project" value="UniProtKB-KW"/>
</dbReference>
<dbReference type="GO" id="GO:0009773">
    <property type="term" value="P:photosynthetic electron transport in photosystem I"/>
    <property type="evidence" value="ECO:0007669"/>
    <property type="project" value="InterPro"/>
</dbReference>
<dbReference type="FunFam" id="3.30.70.20:FF:000001">
    <property type="entry name" value="Photosystem I iron-sulfur center"/>
    <property type="match status" value="1"/>
</dbReference>
<dbReference type="Gene3D" id="3.30.70.20">
    <property type="match status" value="1"/>
</dbReference>
<dbReference type="HAMAP" id="MF_01303">
    <property type="entry name" value="PSI_PsaC"/>
    <property type="match status" value="1"/>
</dbReference>
<dbReference type="InterPro" id="IPR017896">
    <property type="entry name" value="4Fe4S_Fe-S-bd"/>
</dbReference>
<dbReference type="InterPro" id="IPR017900">
    <property type="entry name" value="4Fe4S_Fe_S_CS"/>
</dbReference>
<dbReference type="InterPro" id="IPR050157">
    <property type="entry name" value="PSI_iron-sulfur_center"/>
</dbReference>
<dbReference type="InterPro" id="IPR017491">
    <property type="entry name" value="PSI_PsaC"/>
</dbReference>
<dbReference type="NCBIfam" id="TIGR03048">
    <property type="entry name" value="PS_I_psaC"/>
    <property type="match status" value="1"/>
</dbReference>
<dbReference type="PANTHER" id="PTHR24960:SF79">
    <property type="entry name" value="PHOTOSYSTEM I IRON-SULFUR CENTER"/>
    <property type="match status" value="1"/>
</dbReference>
<dbReference type="PANTHER" id="PTHR24960">
    <property type="entry name" value="PHOTOSYSTEM I IRON-SULFUR CENTER-RELATED"/>
    <property type="match status" value="1"/>
</dbReference>
<dbReference type="Pfam" id="PF14697">
    <property type="entry name" value="Fer4_21"/>
    <property type="match status" value="1"/>
</dbReference>
<dbReference type="SUPFAM" id="SSF54862">
    <property type="entry name" value="4Fe-4S ferredoxins"/>
    <property type="match status" value="1"/>
</dbReference>
<dbReference type="PROSITE" id="PS00198">
    <property type="entry name" value="4FE4S_FER_1"/>
    <property type="match status" value="2"/>
</dbReference>
<dbReference type="PROSITE" id="PS51379">
    <property type="entry name" value="4FE4S_FER_2"/>
    <property type="match status" value="2"/>
</dbReference>